<reference key="1">
    <citation type="journal article" date="2003" name="Nature">
        <title>Single origin of Malagasy Carnivora from an African ancestor.</title>
        <authorList>
            <person name="Yoder A.D."/>
            <person name="Burns M.M."/>
            <person name="Zehr S."/>
            <person name="Delefosse T."/>
            <person name="Veron G."/>
            <person name="Goodman S.M."/>
            <person name="Flynn J.J."/>
        </authorList>
    </citation>
    <scope>NUCLEOTIDE SEQUENCE [GENOMIC DNA]</scope>
</reference>
<reference key="2">
    <citation type="journal article" date="2005" name="Mol. Phylogenet. Evol.">
        <title>A phylogeny of the Caniformia (order Carnivora) based on 12 complete protein-coding mitochondrial genes.</title>
        <authorList>
            <person name="Delisle I."/>
            <person name="Strobeck C."/>
        </authorList>
    </citation>
    <scope>NUCLEOTIDE SEQUENCE [GENOMIC DNA]</scope>
</reference>
<reference key="3">
    <citation type="journal article" date="2006" name="Genome Res.">
        <title>Relaxation of selective constraint on dog mitochondrial DNA following domestication.</title>
        <authorList>
            <person name="Bjornerfeldt S."/>
            <person name="Webster M.T."/>
            <person name="Vila C."/>
        </authorList>
    </citation>
    <scope>NUCLEOTIDE SEQUENCE [GENOMIC DNA]</scope>
    <scope>VARIANTS ALA-67; VAL-136; ASN-147 AND MET-164</scope>
</reference>
<reference key="4">
    <citation type="journal article" date="2006" name="Mol. Phylogenet. Evol.">
        <title>Molecular systematics of the Hyaenidae: relationships of a relictual lineage resolved by a molecular supermatrix.</title>
        <authorList>
            <person name="Koepfli K.-P."/>
            <person name="Jenks S.M."/>
            <person name="Eizirik E."/>
            <person name="Zahirpour T."/>
            <person name="Van Valkenburgh B."/>
            <person name="Wayne R.K."/>
        </authorList>
    </citation>
    <scope>NUCLEOTIDE SEQUENCE [GENOMIC DNA]</scope>
</reference>
<keyword id="KW-0249">Electron transport</keyword>
<keyword id="KW-0349">Heme</keyword>
<keyword id="KW-0408">Iron</keyword>
<keyword id="KW-0472">Membrane</keyword>
<keyword id="KW-0479">Metal-binding</keyword>
<keyword id="KW-0496">Mitochondrion</keyword>
<keyword id="KW-0999">Mitochondrion inner membrane</keyword>
<keyword id="KW-0679">Respiratory chain</keyword>
<keyword id="KW-0812">Transmembrane</keyword>
<keyword id="KW-1133">Transmembrane helix</keyword>
<keyword id="KW-0813">Transport</keyword>
<keyword id="KW-0830">Ubiquinone</keyword>
<feature type="chain" id="PRO_0000060717" description="Cytochrome b">
    <location>
        <begin position="1"/>
        <end position="379"/>
    </location>
</feature>
<feature type="transmembrane region" description="Helical" evidence="2">
    <location>
        <begin position="33"/>
        <end position="53"/>
    </location>
</feature>
<feature type="transmembrane region" description="Helical" evidence="2">
    <location>
        <begin position="77"/>
        <end position="98"/>
    </location>
</feature>
<feature type="transmembrane region" description="Helical" evidence="2">
    <location>
        <begin position="113"/>
        <end position="133"/>
    </location>
</feature>
<feature type="transmembrane region" description="Helical" evidence="2">
    <location>
        <begin position="178"/>
        <end position="198"/>
    </location>
</feature>
<feature type="transmembrane region" description="Helical" evidence="2">
    <location>
        <begin position="226"/>
        <end position="246"/>
    </location>
</feature>
<feature type="transmembrane region" description="Helical" evidence="2">
    <location>
        <begin position="288"/>
        <end position="308"/>
    </location>
</feature>
<feature type="transmembrane region" description="Helical" evidence="2">
    <location>
        <begin position="320"/>
        <end position="340"/>
    </location>
</feature>
<feature type="transmembrane region" description="Helical" evidence="2">
    <location>
        <begin position="347"/>
        <end position="367"/>
    </location>
</feature>
<feature type="binding site" description="axial binding residue" evidence="2">
    <location>
        <position position="83"/>
    </location>
    <ligand>
        <name>heme b</name>
        <dbReference type="ChEBI" id="CHEBI:60344"/>
        <label>b562</label>
    </ligand>
    <ligandPart>
        <name>Fe</name>
        <dbReference type="ChEBI" id="CHEBI:18248"/>
    </ligandPart>
</feature>
<feature type="binding site" description="axial binding residue" evidence="2">
    <location>
        <position position="97"/>
    </location>
    <ligand>
        <name>heme b</name>
        <dbReference type="ChEBI" id="CHEBI:60344"/>
        <label>b566</label>
    </ligand>
    <ligandPart>
        <name>Fe</name>
        <dbReference type="ChEBI" id="CHEBI:18248"/>
    </ligandPart>
</feature>
<feature type="binding site" description="axial binding residue" evidence="2">
    <location>
        <position position="182"/>
    </location>
    <ligand>
        <name>heme b</name>
        <dbReference type="ChEBI" id="CHEBI:60344"/>
        <label>b562</label>
    </ligand>
    <ligandPart>
        <name>Fe</name>
        <dbReference type="ChEBI" id="CHEBI:18248"/>
    </ligandPart>
</feature>
<feature type="binding site" description="axial binding residue" evidence="2">
    <location>
        <position position="196"/>
    </location>
    <ligand>
        <name>heme b</name>
        <dbReference type="ChEBI" id="CHEBI:60344"/>
        <label>b566</label>
    </ligand>
    <ligandPart>
        <name>Fe</name>
        <dbReference type="ChEBI" id="CHEBI:18248"/>
    </ligandPart>
</feature>
<feature type="binding site" evidence="2">
    <location>
        <position position="201"/>
    </location>
    <ligand>
        <name>a ubiquinone</name>
        <dbReference type="ChEBI" id="CHEBI:16389"/>
    </ligand>
</feature>
<feature type="sequence variant" evidence="5">
    <original>T</original>
    <variation>A</variation>
    <location>
        <position position="67"/>
    </location>
</feature>
<feature type="sequence variant" evidence="5">
    <original>G</original>
    <variation>V</variation>
    <location>
        <position position="136"/>
    </location>
</feature>
<feature type="sequence variant" evidence="5">
    <original>T</original>
    <variation>N</variation>
    <location>
        <position position="147"/>
    </location>
</feature>
<feature type="sequence variant" evidence="5">
    <original>I</original>
    <variation>M</variation>
    <location>
        <position position="164"/>
    </location>
</feature>
<organism>
    <name type="scientific">Canis lupus</name>
    <name type="common">Gray wolf</name>
    <dbReference type="NCBI Taxonomy" id="9612"/>
    <lineage>
        <taxon>Eukaryota</taxon>
        <taxon>Metazoa</taxon>
        <taxon>Chordata</taxon>
        <taxon>Craniata</taxon>
        <taxon>Vertebrata</taxon>
        <taxon>Euteleostomi</taxon>
        <taxon>Mammalia</taxon>
        <taxon>Eutheria</taxon>
        <taxon>Laurasiatheria</taxon>
        <taxon>Carnivora</taxon>
        <taxon>Caniformia</taxon>
        <taxon>Canidae</taxon>
        <taxon>Canis</taxon>
    </lineage>
</organism>
<comment type="function">
    <text evidence="2">Component of the ubiquinol-cytochrome c reductase complex (complex III or cytochrome b-c1 complex) that is part of the mitochondrial respiratory chain. The b-c1 complex mediates electron transfer from ubiquinol to cytochrome c. Contributes to the generation of a proton gradient across the mitochondrial membrane that is then used for ATP synthesis.</text>
</comment>
<comment type="cofactor">
    <cofactor evidence="2">
        <name>heme b</name>
        <dbReference type="ChEBI" id="CHEBI:60344"/>
    </cofactor>
    <text evidence="2">Binds 2 heme b groups non-covalently.</text>
</comment>
<comment type="subunit">
    <text evidence="2">The cytochrome bc1 complex contains 11 subunits: 3 respiratory subunits (MT-CYB, CYC1 and UQCRFS1), 2 core proteins (UQCRC1 and UQCRC2) and 6 low-molecular weight proteins (UQCRH/QCR6, UQCRB/QCR7, UQCRQ/QCR8, UQCR10/QCR9, UQCR11/QCR10 and a cleavage product of UQCRFS1). This cytochrome bc1 complex then forms a dimer.</text>
</comment>
<comment type="subcellular location">
    <subcellularLocation>
        <location evidence="2">Mitochondrion inner membrane</location>
        <topology evidence="2">Multi-pass membrane protein</topology>
    </subcellularLocation>
</comment>
<comment type="miscellaneous">
    <text evidence="1">Heme 1 (or BL or b562) is low-potential and absorbs at about 562 nm, and heme 2 (or BH or b566) is high-potential and absorbs at about 566 nm.</text>
</comment>
<comment type="similarity">
    <text evidence="3 4">Belongs to the cytochrome b family.</text>
</comment>
<comment type="caution">
    <text evidence="2">The full-length protein contains only eight transmembrane helices, not nine as predicted by bioinformatics tools.</text>
</comment>
<accession>Q6Y8J2</accession>
<accession>Q1HK78</accession>
<accession>Q1HKA4</accession>
<accession>Q3ZED2</accession>
<geneLocation type="mitochondrion"/>
<protein>
    <recommendedName>
        <fullName>Cytochrome b</fullName>
    </recommendedName>
    <alternativeName>
        <fullName>Complex III subunit 3</fullName>
    </alternativeName>
    <alternativeName>
        <fullName>Complex III subunit III</fullName>
    </alternativeName>
    <alternativeName>
        <fullName>Cytochrome b-c1 complex subunit 3</fullName>
    </alternativeName>
    <alternativeName>
        <fullName>Ubiquinol-cytochrome-c reductase complex cytochrome b subunit</fullName>
    </alternativeName>
</protein>
<name>CYB_CANLU</name>
<proteinExistence type="inferred from homology"/>
<evidence type="ECO:0000250" key="1"/>
<evidence type="ECO:0000250" key="2">
    <source>
        <dbReference type="UniProtKB" id="P00157"/>
    </source>
</evidence>
<evidence type="ECO:0000255" key="3">
    <source>
        <dbReference type="PROSITE-ProRule" id="PRU00967"/>
    </source>
</evidence>
<evidence type="ECO:0000255" key="4">
    <source>
        <dbReference type="PROSITE-ProRule" id="PRU00968"/>
    </source>
</evidence>
<evidence type="ECO:0000269" key="5">
    <source>
    </source>
</evidence>
<gene>
    <name type="primary">MT-CYB</name>
    <name type="synonym">COB</name>
    <name type="synonym">CYTB</name>
    <name type="synonym">MTCYB</name>
</gene>
<dbReference type="EMBL" id="AY170103">
    <property type="protein sequence ID" value="AAN85622.1"/>
    <property type="molecule type" value="Genomic_DNA"/>
</dbReference>
<dbReference type="EMBL" id="AY598499">
    <property type="protein sequence ID" value="AAU00445.1"/>
    <property type="molecule type" value="Genomic_DNA"/>
</dbReference>
<dbReference type="EMBL" id="DQ480503">
    <property type="protein sequence ID" value="ABE48167.1"/>
    <property type="molecule type" value="Genomic_DNA"/>
</dbReference>
<dbReference type="EMBL" id="DQ480504">
    <property type="protein sequence ID" value="ABE48180.1"/>
    <property type="molecule type" value="Genomic_DNA"/>
</dbReference>
<dbReference type="EMBL" id="DQ480505">
    <property type="protein sequence ID" value="ABE48193.1"/>
    <property type="molecule type" value="Genomic_DNA"/>
</dbReference>
<dbReference type="EMBL" id="DQ480506">
    <property type="protein sequence ID" value="ABE48206.1"/>
    <property type="molecule type" value="Genomic_DNA"/>
</dbReference>
<dbReference type="EMBL" id="DQ480507">
    <property type="protein sequence ID" value="ABE48219.1"/>
    <property type="molecule type" value="Genomic_DNA"/>
</dbReference>
<dbReference type="EMBL" id="DQ480508">
    <property type="protein sequence ID" value="ABE48232.1"/>
    <property type="molecule type" value="Genomic_DNA"/>
</dbReference>
<dbReference type="EMBL" id="AY928668">
    <property type="protein sequence ID" value="AAY18237.1"/>
    <property type="molecule type" value="Genomic_DNA"/>
</dbReference>
<dbReference type="RefSeq" id="YP_626740.1">
    <property type="nucleotide sequence ID" value="NC_008092.1"/>
</dbReference>
<dbReference type="SMR" id="Q6Y8J2"/>
<dbReference type="GeneID" id="4097763"/>
<dbReference type="CTD" id="4519"/>
<dbReference type="GO" id="GO:0005743">
    <property type="term" value="C:mitochondrial inner membrane"/>
    <property type="evidence" value="ECO:0007669"/>
    <property type="project" value="UniProtKB-SubCell"/>
</dbReference>
<dbReference type="GO" id="GO:0045275">
    <property type="term" value="C:respiratory chain complex III"/>
    <property type="evidence" value="ECO:0007669"/>
    <property type="project" value="InterPro"/>
</dbReference>
<dbReference type="GO" id="GO:0046872">
    <property type="term" value="F:metal ion binding"/>
    <property type="evidence" value="ECO:0007669"/>
    <property type="project" value="UniProtKB-KW"/>
</dbReference>
<dbReference type="GO" id="GO:0008121">
    <property type="term" value="F:ubiquinol-cytochrome-c reductase activity"/>
    <property type="evidence" value="ECO:0007669"/>
    <property type="project" value="InterPro"/>
</dbReference>
<dbReference type="GO" id="GO:0006122">
    <property type="term" value="P:mitochondrial electron transport, ubiquinol to cytochrome c"/>
    <property type="evidence" value="ECO:0007669"/>
    <property type="project" value="TreeGrafter"/>
</dbReference>
<dbReference type="CDD" id="cd00290">
    <property type="entry name" value="cytochrome_b_C"/>
    <property type="match status" value="1"/>
</dbReference>
<dbReference type="CDD" id="cd00284">
    <property type="entry name" value="Cytochrome_b_N"/>
    <property type="match status" value="1"/>
</dbReference>
<dbReference type="FunFam" id="1.20.810.10:FF:000002">
    <property type="entry name" value="Cytochrome b"/>
    <property type="match status" value="1"/>
</dbReference>
<dbReference type="Gene3D" id="1.20.810.10">
    <property type="entry name" value="Cytochrome Bc1 Complex, Chain C"/>
    <property type="match status" value="1"/>
</dbReference>
<dbReference type="InterPro" id="IPR005798">
    <property type="entry name" value="Cyt_b/b6_C"/>
</dbReference>
<dbReference type="InterPro" id="IPR036150">
    <property type="entry name" value="Cyt_b/b6_C_sf"/>
</dbReference>
<dbReference type="InterPro" id="IPR005797">
    <property type="entry name" value="Cyt_b/b6_N"/>
</dbReference>
<dbReference type="InterPro" id="IPR027387">
    <property type="entry name" value="Cytb/b6-like_sf"/>
</dbReference>
<dbReference type="InterPro" id="IPR030689">
    <property type="entry name" value="Cytochrome_b"/>
</dbReference>
<dbReference type="InterPro" id="IPR048260">
    <property type="entry name" value="Cytochrome_b_C_euk/bac"/>
</dbReference>
<dbReference type="InterPro" id="IPR048259">
    <property type="entry name" value="Cytochrome_b_N_euk/bac"/>
</dbReference>
<dbReference type="InterPro" id="IPR016174">
    <property type="entry name" value="Di-haem_cyt_TM"/>
</dbReference>
<dbReference type="PANTHER" id="PTHR19271">
    <property type="entry name" value="CYTOCHROME B"/>
    <property type="match status" value="1"/>
</dbReference>
<dbReference type="PANTHER" id="PTHR19271:SF16">
    <property type="entry name" value="CYTOCHROME B"/>
    <property type="match status" value="1"/>
</dbReference>
<dbReference type="Pfam" id="PF00032">
    <property type="entry name" value="Cytochrom_B_C"/>
    <property type="match status" value="1"/>
</dbReference>
<dbReference type="Pfam" id="PF00033">
    <property type="entry name" value="Cytochrome_B"/>
    <property type="match status" value="1"/>
</dbReference>
<dbReference type="PIRSF" id="PIRSF038885">
    <property type="entry name" value="COB"/>
    <property type="match status" value="1"/>
</dbReference>
<dbReference type="SUPFAM" id="SSF81648">
    <property type="entry name" value="a domain/subunit of cytochrome bc1 complex (Ubiquinol-cytochrome c reductase)"/>
    <property type="match status" value="1"/>
</dbReference>
<dbReference type="SUPFAM" id="SSF81342">
    <property type="entry name" value="Transmembrane di-heme cytochromes"/>
    <property type="match status" value="1"/>
</dbReference>
<dbReference type="PROSITE" id="PS51003">
    <property type="entry name" value="CYTB_CTER"/>
    <property type="match status" value="1"/>
</dbReference>
<dbReference type="PROSITE" id="PS51002">
    <property type="entry name" value="CYTB_NTER"/>
    <property type="match status" value="1"/>
</dbReference>
<sequence>MTNIRKTHPLAKIVNNSFIDLPAPSNISAWWNFGSLLGVCLILQILTGLFLAMHYTSDTATAFSSVTHICRDVNYGWIIRYMHANGASMFFICLFLHVGRGLYYGSYVFMETWNIGIVLLFATMATAFMGYVLPWGQMSFWGATVITNLLSAIPYIGTDLVEWIWGGFSVDKATLTRFFAFHFILPFIIAALAMVHLLFLHETGSNNPSGITSDSDKIPFHPYYTIKDILGALLLLLILMSLVLFSPDLLGDPDNYTPANPLNTPPHIKPEWYFLFAYAILRSIPNKLGGVLALVFSILILAFIPLLHTSKQRSMMFRPLSQCLFWLLVADLLTLTWIGGQPVEHPFIIIGQVASILYFTILLILMPTVSVIENNLLKW</sequence>